<proteinExistence type="inferred from homology"/>
<dbReference type="EC" id="2.3.2.6" evidence="1"/>
<dbReference type="EMBL" id="CP001252">
    <property type="protein sequence ID" value="ACK46387.1"/>
    <property type="molecule type" value="Genomic_DNA"/>
</dbReference>
<dbReference type="RefSeq" id="WP_012587478.1">
    <property type="nucleotide sequence ID" value="NC_011663.1"/>
</dbReference>
<dbReference type="SMR" id="B8E954"/>
<dbReference type="KEGG" id="sbp:Sbal223_1882"/>
<dbReference type="HOGENOM" id="CLU_075045_0_0_6"/>
<dbReference type="Proteomes" id="UP000002507">
    <property type="component" value="Chromosome"/>
</dbReference>
<dbReference type="GO" id="GO:0005737">
    <property type="term" value="C:cytoplasm"/>
    <property type="evidence" value="ECO:0007669"/>
    <property type="project" value="UniProtKB-SubCell"/>
</dbReference>
<dbReference type="GO" id="GO:0008914">
    <property type="term" value="F:leucyl-tRNA--protein transferase activity"/>
    <property type="evidence" value="ECO:0007669"/>
    <property type="project" value="UniProtKB-UniRule"/>
</dbReference>
<dbReference type="GO" id="GO:0030163">
    <property type="term" value="P:protein catabolic process"/>
    <property type="evidence" value="ECO:0007669"/>
    <property type="project" value="UniProtKB-UniRule"/>
</dbReference>
<dbReference type="FunFam" id="3.30.70.3550:FF:000001">
    <property type="entry name" value="Leucyl/phenylalanyl-tRNA--protein transferase"/>
    <property type="match status" value="1"/>
</dbReference>
<dbReference type="FunFam" id="3.40.630.70:FF:000001">
    <property type="entry name" value="Leucyl/phenylalanyl-tRNA--protein transferase"/>
    <property type="match status" value="1"/>
</dbReference>
<dbReference type="Gene3D" id="3.40.630.70">
    <property type="entry name" value="Leucyl/phenylalanyl-tRNA-protein transferase, C-terminal domain"/>
    <property type="match status" value="1"/>
</dbReference>
<dbReference type="Gene3D" id="3.30.70.3550">
    <property type="entry name" value="Leucyl/phenylalanyl-tRNA-protein transferase, N-terminal domain"/>
    <property type="match status" value="1"/>
</dbReference>
<dbReference type="HAMAP" id="MF_00688">
    <property type="entry name" value="Leu_Phe_trans"/>
    <property type="match status" value="1"/>
</dbReference>
<dbReference type="InterPro" id="IPR016181">
    <property type="entry name" value="Acyl_CoA_acyltransferase"/>
</dbReference>
<dbReference type="InterPro" id="IPR004616">
    <property type="entry name" value="Leu/Phe-tRNA_Trfase"/>
</dbReference>
<dbReference type="InterPro" id="IPR042203">
    <property type="entry name" value="Leu/Phe-tRNA_Trfase_C"/>
</dbReference>
<dbReference type="InterPro" id="IPR042221">
    <property type="entry name" value="Leu/Phe-tRNA_Trfase_N"/>
</dbReference>
<dbReference type="NCBIfam" id="TIGR00667">
    <property type="entry name" value="aat"/>
    <property type="match status" value="1"/>
</dbReference>
<dbReference type="PANTHER" id="PTHR30098">
    <property type="entry name" value="LEUCYL/PHENYLALANYL-TRNA--PROTEIN TRANSFERASE"/>
    <property type="match status" value="1"/>
</dbReference>
<dbReference type="PANTHER" id="PTHR30098:SF2">
    <property type="entry name" value="LEUCYL_PHENYLALANYL-TRNA--PROTEIN TRANSFERASE"/>
    <property type="match status" value="1"/>
</dbReference>
<dbReference type="Pfam" id="PF03588">
    <property type="entry name" value="Leu_Phe_trans"/>
    <property type="match status" value="1"/>
</dbReference>
<dbReference type="SUPFAM" id="SSF55729">
    <property type="entry name" value="Acyl-CoA N-acyltransferases (Nat)"/>
    <property type="match status" value="1"/>
</dbReference>
<comment type="function">
    <text evidence="1">Functions in the N-end rule pathway of protein degradation where it conjugates Leu, Phe and, less efficiently, Met from aminoacyl-tRNAs to the N-termini of proteins containing an N-terminal arginine or lysine.</text>
</comment>
<comment type="catalytic activity">
    <reaction evidence="1">
        <text>N-terminal L-lysyl-[protein] + L-leucyl-tRNA(Leu) = N-terminal L-leucyl-L-lysyl-[protein] + tRNA(Leu) + H(+)</text>
        <dbReference type="Rhea" id="RHEA:12340"/>
        <dbReference type="Rhea" id="RHEA-COMP:9613"/>
        <dbReference type="Rhea" id="RHEA-COMP:9622"/>
        <dbReference type="Rhea" id="RHEA-COMP:12670"/>
        <dbReference type="Rhea" id="RHEA-COMP:12671"/>
        <dbReference type="ChEBI" id="CHEBI:15378"/>
        <dbReference type="ChEBI" id="CHEBI:65249"/>
        <dbReference type="ChEBI" id="CHEBI:78442"/>
        <dbReference type="ChEBI" id="CHEBI:78494"/>
        <dbReference type="ChEBI" id="CHEBI:133043"/>
        <dbReference type="EC" id="2.3.2.6"/>
    </reaction>
</comment>
<comment type="catalytic activity">
    <reaction evidence="1">
        <text>N-terminal L-arginyl-[protein] + L-leucyl-tRNA(Leu) = N-terminal L-leucyl-L-arginyl-[protein] + tRNA(Leu) + H(+)</text>
        <dbReference type="Rhea" id="RHEA:50416"/>
        <dbReference type="Rhea" id="RHEA-COMP:9613"/>
        <dbReference type="Rhea" id="RHEA-COMP:9622"/>
        <dbReference type="Rhea" id="RHEA-COMP:12672"/>
        <dbReference type="Rhea" id="RHEA-COMP:12673"/>
        <dbReference type="ChEBI" id="CHEBI:15378"/>
        <dbReference type="ChEBI" id="CHEBI:64719"/>
        <dbReference type="ChEBI" id="CHEBI:78442"/>
        <dbReference type="ChEBI" id="CHEBI:78494"/>
        <dbReference type="ChEBI" id="CHEBI:133044"/>
        <dbReference type="EC" id="2.3.2.6"/>
    </reaction>
</comment>
<comment type="catalytic activity">
    <reaction evidence="1">
        <text>L-phenylalanyl-tRNA(Phe) + an N-terminal L-alpha-aminoacyl-[protein] = an N-terminal L-phenylalanyl-L-alpha-aminoacyl-[protein] + tRNA(Phe)</text>
        <dbReference type="Rhea" id="RHEA:43632"/>
        <dbReference type="Rhea" id="RHEA-COMP:9668"/>
        <dbReference type="Rhea" id="RHEA-COMP:9699"/>
        <dbReference type="Rhea" id="RHEA-COMP:10636"/>
        <dbReference type="Rhea" id="RHEA-COMP:10637"/>
        <dbReference type="ChEBI" id="CHEBI:78442"/>
        <dbReference type="ChEBI" id="CHEBI:78531"/>
        <dbReference type="ChEBI" id="CHEBI:78597"/>
        <dbReference type="ChEBI" id="CHEBI:83561"/>
        <dbReference type="EC" id="2.3.2.6"/>
    </reaction>
</comment>
<comment type="subcellular location">
    <subcellularLocation>
        <location evidence="1">Cytoplasm</location>
    </subcellularLocation>
</comment>
<comment type="similarity">
    <text evidence="1">Belongs to the L/F-transferase family.</text>
</comment>
<evidence type="ECO:0000255" key="1">
    <source>
        <dbReference type="HAMAP-Rule" id="MF_00688"/>
    </source>
</evidence>
<organism>
    <name type="scientific">Shewanella baltica (strain OS223)</name>
    <dbReference type="NCBI Taxonomy" id="407976"/>
    <lineage>
        <taxon>Bacteria</taxon>
        <taxon>Pseudomonadati</taxon>
        <taxon>Pseudomonadota</taxon>
        <taxon>Gammaproteobacteria</taxon>
        <taxon>Alteromonadales</taxon>
        <taxon>Shewanellaceae</taxon>
        <taxon>Shewanella</taxon>
    </lineage>
</organism>
<keyword id="KW-0012">Acyltransferase</keyword>
<keyword id="KW-0963">Cytoplasm</keyword>
<keyword id="KW-0808">Transferase</keyword>
<accession>B8E954</accession>
<protein>
    <recommendedName>
        <fullName evidence="1">Leucyl/phenylalanyl-tRNA--protein transferase</fullName>
        <ecNumber evidence="1">2.3.2.6</ecNumber>
    </recommendedName>
    <alternativeName>
        <fullName evidence="1">L/F-transferase</fullName>
    </alternativeName>
    <alternativeName>
        <fullName evidence="1">Leucyltransferase</fullName>
    </alternativeName>
    <alternativeName>
        <fullName evidence="1">Phenyalanyltransferase</fullName>
    </alternativeName>
</protein>
<name>LFTR_SHEB2</name>
<gene>
    <name evidence="1" type="primary">aat</name>
    <name type="ordered locus">Sbal223_1882</name>
</gene>
<feature type="chain" id="PRO_1000147796" description="Leucyl/phenylalanyl-tRNA--protein transferase">
    <location>
        <begin position="1"/>
        <end position="237"/>
    </location>
</feature>
<sequence length="237" mass="26816">MKSLSFLNHEFEAFPSPELALTDPNGLLAIGGDLRPERLLSAYYNGIFPWFNSDDPILWWSPDPRAVFIPGEIHISTSLRKYLKKQPWRITINHAFTDVMAGCAQPREKQSGTWITQEIQMAYRELHYTGHAHSIEVWEGERLIGGLYGLAIGQVFCGESMFHRKTNASKAAVAALQQHLLKMGFKLIDAQVMNSHLESLGAKAIKRIDFITLLSELRNNPVDPATWTTKEVILELE</sequence>
<reference key="1">
    <citation type="submission" date="2008-12" db="EMBL/GenBank/DDBJ databases">
        <title>Complete sequence of chromosome of Shewanella baltica OS223.</title>
        <authorList>
            <consortium name="US DOE Joint Genome Institute"/>
            <person name="Lucas S."/>
            <person name="Copeland A."/>
            <person name="Lapidus A."/>
            <person name="Glavina del Rio T."/>
            <person name="Dalin E."/>
            <person name="Tice H."/>
            <person name="Bruce D."/>
            <person name="Goodwin L."/>
            <person name="Pitluck S."/>
            <person name="Chertkov O."/>
            <person name="Meincke L."/>
            <person name="Brettin T."/>
            <person name="Detter J.C."/>
            <person name="Han C."/>
            <person name="Kuske C.R."/>
            <person name="Larimer F."/>
            <person name="Land M."/>
            <person name="Hauser L."/>
            <person name="Kyrpides N."/>
            <person name="Ovchinnikova G."/>
            <person name="Brettar I."/>
            <person name="Rodrigues J."/>
            <person name="Konstantinidis K."/>
            <person name="Tiedje J."/>
        </authorList>
    </citation>
    <scope>NUCLEOTIDE SEQUENCE [LARGE SCALE GENOMIC DNA]</scope>
    <source>
        <strain>OS223</strain>
    </source>
</reference>